<dbReference type="EC" id="4.2.1.10" evidence="1"/>
<dbReference type="EMBL" id="CP001104">
    <property type="protein sequence ID" value="ACR72321.1"/>
    <property type="molecule type" value="Genomic_DNA"/>
</dbReference>
<dbReference type="RefSeq" id="WP_012739556.1">
    <property type="nucleotide sequence ID" value="NC_012778.1"/>
</dbReference>
<dbReference type="SMR" id="C4Z158"/>
<dbReference type="STRING" id="515620.EUBELI_01325"/>
<dbReference type="GeneID" id="41356038"/>
<dbReference type="KEGG" id="eel:EUBELI_01325"/>
<dbReference type="eggNOG" id="COG0757">
    <property type="taxonomic scope" value="Bacteria"/>
</dbReference>
<dbReference type="HOGENOM" id="CLU_090968_3_0_9"/>
<dbReference type="UniPathway" id="UPA00053">
    <property type="reaction ID" value="UER00086"/>
</dbReference>
<dbReference type="Proteomes" id="UP000001476">
    <property type="component" value="Chromosome"/>
</dbReference>
<dbReference type="GO" id="GO:0003855">
    <property type="term" value="F:3-dehydroquinate dehydratase activity"/>
    <property type="evidence" value="ECO:0007669"/>
    <property type="project" value="UniProtKB-UniRule"/>
</dbReference>
<dbReference type="GO" id="GO:0008652">
    <property type="term" value="P:amino acid biosynthetic process"/>
    <property type="evidence" value="ECO:0007669"/>
    <property type="project" value="UniProtKB-KW"/>
</dbReference>
<dbReference type="GO" id="GO:0009073">
    <property type="term" value="P:aromatic amino acid family biosynthetic process"/>
    <property type="evidence" value="ECO:0007669"/>
    <property type="project" value="UniProtKB-KW"/>
</dbReference>
<dbReference type="GO" id="GO:0009423">
    <property type="term" value="P:chorismate biosynthetic process"/>
    <property type="evidence" value="ECO:0007669"/>
    <property type="project" value="UniProtKB-UniRule"/>
</dbReference>
<dbReference type="GO" id="GO:0019631">
    <property type="term" value="P:quinate catabolic process"/>
    <property type="evidence" value="ECO:0007669"/>
    <property type="project" value="TreeGrafter"/>
</dbReference>
<dbReference type="CDD" id="cd00466">
    <property type="entry name" value="DHQase_II"/>
    <property type="match status" value="1"/>
</dbReference>
<dbReference type="Gene3D" id="3.40.50.9100">
    <property type="entry name" value="Dehydroquinase, class II"/>
    <property type="match status" value="1"/>
</dbReference>
<dbReference type="HAMAP" id="MF_00169">
    <property type="entry name" value="AroQ"/>
    <property type="match status" value="1"/>
</dbReference>
<dbReference type="InterPro" id="IPR001874">
    <property type="entry name" value="DHquinase_II"/>
</dbReference>
<dbReference type="InterPro" id="IPR018509">
    <property type="entry name" value="DHquinase_II_CS"/>
</dbReference>
<dbReference type="InterPro" id="IPR036441">
    <property type="entry name" value="DHquinase_II_sf"/>
</dbReference>
<dbReference type="NCBIfam" id="TIGR01088">
    <property type="entry name" value="aroQ"/>
    <property type="match status" value="1"/>
</dbReference>
<dbReference type="NCBIfam" id="NF003805">
    <property type="entry name" value="PRK05395.1-2"/>
    <property type="match status" value="1"/>
</dbReference>
<dbReference type="NCBIfam" id="NF003807">
    <property type="entry name" value="PRK05395.1-4"/>
    <property type="match status" value="1"/>
</dbReference>
<dbReference type="PANTHER" id="PTHR21272">
    <property type="entry name" value="CATABOLIC 3-DEHYDROQUINASE"/>
    <property type="match status" value="1"/>
</dbReference>
<dbReference type="PANTHER" id="PTHR21272:SF3">
    <property type="entry name" value="CATABOLIC 3-DEHYDROQUINASE"/>
    <property type="match status" value="1"/>
</dbReference>
<dbReference type="Pfam" id="PF01220">
    <property type="entry name" value="DHquinase_II"/>
    <property type="match status" value="1"/>
</dbReference>
<dbReference type="PIRSF" id="PIRSF001399">
    <property type="entry name" value="DHquinase_II"/>
    <property type="match status" value="1"/>
</dbReference>
<dbReference type="SUPFAM" id="SSF52304">
    <property type="entry name" value="Type II 3-dehydroquinate dehydratase"/>
    <property type="match status" value="1"/>
</dbReference>
<dbReference type="PROSITE" id="PS01029">
    <property type="entry name" value="DEHYDROQUINASE_II"/>
    <property type="match status" value="1"/>
</dbReference>
<proteinExistence type="inferred from homology"/>
<reference key="1">
    <citation type="journal article" date="2009" name="Proc. Natl. Acad. Sci. U.S.A.">
        <title>Characterizing a model human gut microbiota composed of members of its two dominant bacterial phyla.</title>
        <authorList>
            <person name="Mahowald M.A."/>
            <person name="Rey F.E."/>
            <person name="Seedorf H."/>
            <person name="Turnbaugh P.J."/>
            <person name="Fulton R.S."/>
            <person name="Wollam A."/>
            <person name="Shah N."/>
            <person name="Wang C."/>
            <person name="Magrini V."/>
            <person name="Wilson R.K."/>
            <person name="Cantarel B.L."/>
            <person name="Coutinho P.M."/>
            <person name="Henrissat B."/>
            <person name="Crock L.W."/>
            <person name="Russell A."/>
            <person name="Verberkmoes N.C."/>
            <person name="Hettich R.L."/>
            <person name="Gordon J.I."/>
        </authorList>
    </citation>
    <scope>NUCLEOTIDE SEQUENCE [LARGE SCALE GENOMIC DNA]</scope>
    <source>
        <strain>ATCC 27750 / DSM 3376 / VPI C15-48 / C15-B4</strain>
    </source>
</reference>
<evidence type="ECO:0000255" key="1">
    <source>
        <dbReference type="HAMAP-Rule" id="MF_00169"/>
    </source>
</evidence>
<comment type="function">
    <text evidence="1">Catalyzes a trans-dehydration via an enolate intermediate.</text>
</comment>
<comment type="catalytic activity">
    <reaction evidence="1">
        <text>3-dehydroquinate = 3-dehydroshikimate + H2O</text>
        <dbReference type="Rhea" id="RHEA:21096"/>
        <dbReference type="ChEBI" id="CHEBI:15377"/>
        <dbReference type="ChEBI" id="CHEBI:16630"/>
        <dbReference type="ChEBI" id="CHEBI:32364"/>
        <dbReference type="EC" id="4.2.1.10"/>
    </reaction>
</comment>
<comment type="pathway">
    <text evidence="1">Metabolic intermediate biosynthesis; chorismate biosynthesis; chorismate from D-erythrose 4-phosphate and phosphoenolpyruvate: step 3/7.</text>
</comment>
<comment type="subunit">
    <text evidence="1">Homododecamer.</text>
</comment>
<comment type="similarity">
    <text evidence="1">Belongs to the type-II 3-dehydroquinase family.</text>
</comment>
<protein>
    <recommendedName>
        <fullName evidence="1">3-dehydroquinate dehydratase</fullName>
        <shortName evidence="1">3-dehydroquinase</shortName>
        <ecNumber evidence="1">4.2.1.10</ecNumber>
    </recommendedName>
    <alternativeName>
        <fullName evidence="1">Type II DHQase</fullName>
    </alternativeName>
</protein>
<feature type="chain" id="PRO_1000203674" description="3-dehydroquinate dehydratase">
    <location>
        <begin position="1"/>
        <end position="147"/>
    </location>
</feature>
<feature type="active site" description="Proton acceptor" evidence="1">
    <location>
        <position position="22"/>
    </location>
</feature>
<feature type="active site" description="Proton donor" evidence="1">
    <location>
        <position position="101"/>
    </location>
</feature>
<feature type="binding site" evidence="1">
    <location>
        <position position="74"/>
    </location>
    <ligand>
        <name>substrate</name>
    </ligand>
</feature>
<feature type="binding site" evidence="1">
    <location>
        <position position="80"/>
    </location>
    <ligand>
        <name>substrate</name>
    </ligand>
</feature>
<feature type="binding site" evidence="1">
    <location>
        <position position="87"/>
    </location>
    <ligand>
        <name>substrate</name>
    </ligand>
</feature>
<feature type="binding site" evidence="1">
    <location>
        <begin position="102"/>
        <end position="103"/>
    </location>
    <ligand>
        <name>substrate</name>
    </ligand>
</feature>
<feature type="binding site" evidence="1">
    <location>
        <position position="112"/>
    </location>
    <ligand>
        <name>substrate</name>
    </ligand>
</feature>
<feature type="site" description="Transition state stabilizer" evidence="1">
    <location>
        <position position="17"/>
    </location>
</feature>
<name>AROQ_LACE2</name>
<gene>
    <name evidence="1" type="primary">aroQ</name>
    <name type="ordered locus">EUBELI_01325</name>
</gene>
<keyword id="KW-0028">Amino-acid biosynthesis</keyword>
<keyword id="KW-0057">Aromatic amino acid biosynthesis</keyword>
<keyword id="KW-0456">Lyase</keyword>
<keyword id="KW-1185">Reference proteome</keyword>
<organism>
    <name type="scientific">Lachnospira eligens (strain ATCC 27750 / DSM 3376 / VPI C15-48 / C15-B4)</name>
    <name type="common">Eubacterium eligens</name>
    <dbReference type="NCBI Taxonomy" id="515620"/>
    <lineage>
        <taxon>Bacteria</taxon>
        <taxon>Bacillati</taxon>
        <taxon>Bacillota</taxon>
        <taxon>Clostridia</taxon>
        <taxon>Lachnospirales</taxon>
        <taxon>Lachnospiraceae</taxon>
        <taxon>Lachnospira</taxon>
    </lineage>
</organism>
<accession>C4Z158</accession>
<sequence length="147" mass="16213">MKILVMNGPNINFLGIREKGIYGEQNYEALVSMIQKKAEELGADVEVFQSNHEGAIIDKIQEAYYNDVDGIVINPGAFTHYSYAVRDALASVAAIPKIEVHISNVHTREEFRHTSVTVPVCNGQVVGLGLKGYLYAMEAVVDLAMKK</sequence>